<gene>
    <name type="primary">SCR37</name>
</gene>
<protein>
    <recommendedName>
        <fullName>Defensin-like SRCA-homolog protein</fullName>
    </recommendedName>
    <alternativeName>
        <fullName>S locus cysteine-rich-like protein 37</fullName>
        <shortName>AlSCR37</shortName>
    </alternativeName>
</protein>
<evidence type="ECO:0000250" key="1"/>
<evidence type="ECO:0000255" key="2"/>
<evidence type="ECO:0000269" key="3">
    <source>
    </source>
</evidence>
<evidence type="ECO:0000269" key="4">
    <source>
    </source>
</evidence>
<evidence type="ECO:0000305" key="5"/>
<accession>C0LQF3</accession>
<accession>Q19MB9</accession>
<organism>
    <name type="scientific">Arabidopsis lyrata</name>
    <name type="common">Lyre-leaved rock-cress</name>
    <name type="synonym">Arabis lyrata</name>
    <dbReference type="NCBI Taxonomy" id="59689"/>
    <lineage>
        <taxon>Eukaryota</taxon>
        <taxon>Viridiplantae</taxon>
        <taxon>Streptophyta</taxon>
        <taxon>Embryophyta</taxon>
        <taxon>Tracheophyta</taxon>
        <taxon>Spermatophyta</taxon>
        <taxon>Magnoliopsida</taxon>
        <taxon>eudicotyledons</taxon>
        <taxon>Gunneridae</taxon>
        <taxon>Pentapetalae</taxon>
        <taxon>rosids</taxon>
        <taxon>malvids</taxon>
        <taxon>Brassicales</taxon>
        <taxon>Brassicaceae</taxon>
        <taxon>Camelineae</taxon>
        <taxon>Arabidopsis</taxon>
    </lineage>
</organism>
<sequence>MRCVVLFMVSCLLIVLLINHFEEVEAQKWKECNLRDIFPGKCEHDANAKLRCKEDIAKNFRPSRPFECDCQTFDQGRICYCKKCLV</sequence>
<comment type="function">
    <text evidence="3 4">Involved in male-mediated self-incompatibility.</text>
</comment>
<comment type="subcellular location">
    <subcellularLocation>
        <location evidence="1">Secreted</location>
    </subcellularLocation>
</comment>
<comment type="similarity">
    <text evidence="5">Belongs to the DEFL family.</text>
</comment>
<keyword id="KW-1015">Disulfide bond</keyword>
<keyword id="KW-0964">Secreted</keyword>
<keyword id="KW-0713">Self-incompatibility</keyword>
<keyword id="KW-0732">Signal</keyword>
<proteinExistence type="inferred from homology"/>
<dbReference type="EMBL" id="FJ752546">
    <property type="protein sequence ID" value="ACN63521.1"/>
    <property type="molecule type" value="Genomic_DNA"/>
</dbReference>
<dbReference type="EMBL" id="DQ520280">
    <property type="protein sequence ID" value="ABF71370.1"/>
    <property type="molecule type" value="Genomic_DNA"/>
</dbReference>
<dbReference type="SMR" id="C0LQF3"/>
<dbReference type="GO" id="GO:0005576">
    <property type="term" value="C:extracellular region"/>
    <property type="evidence" value="ECO:0007669"/>
    <property type="project" value="UniProtKB-SubCell"/>
</dbReference>
<dbReference type="GO" id="GO:0060320">
    <property type="term" value="P:rejection of self pollen"/>
    <property type="evidence" value="ECO:0000315"/>
    <property type="project" value="UniProtKB"/>
</dbReference>
<dbReference type="GO" id="GO:0007165">
    <property type="term" value="P:signal transduction"/>
    <property type="evidence" value="ECO:0007669"/>
    <property type="project" value="InterPro"/>
</dbReference>
<dbReference type="InterPro" id="IPR010682">
    <property type="entry name" value="SCRL"/>
</dbReference>
<dbReference type="PANTHER" id="PTHR34450:SF4">
    <property type="entry name" value="DEFENSIN-LIKE PROTEIN 226-RELATED"/>
    <property type="match status" value="1"/>
</dbReference>
<dbReference type="PANTHER" id="PTHR34450">
    <property type="entry name" value="DEFENSIN-LIKE PROTEIN 245-RELATED"/>
    <property type="match status" value="1"/>
</dbReference>
<dbReference type="Pfam" id="PF06876">
    <property type="entry name" value="SCRL"/>
    <property type="match status" value="1"/>
</dbReference>
<dbReference type="PROSITE" id="PS00022">
    <property type="entry name" value="EGF_1"/>
    <property type="match status" value="1"/>
</dbReference>
<feature type="signal peptide" evidence="2">
    <location>
        <begin position="1"/>
        <end position="26"/>
    </location>
</feature>
<feature type="chain" id="PRO_0000394669" description="Defensin-like SRCA-homolog protein">
    <location>
        <begin position="27"/>
        <end position="86"/>
    </location>
</feature>
<feature type="disulfide bond" evidence="1">
    <location>
        <begin position="32"/>
        <end position="84"/>
    </location>
</feature>
<feature type="disulfide bond" evidence="1">
    <location>
        <begin position="42"/>
        <end position="70"/>
    </location>
</feature>
<feature type="disulfide bond" evidence="1">
    <location>
        <begin position="52"/>
        <end position="79"/>
    </location>
</feature>
<feature type="disulfide bond" evidence="1">
    <location>
        <begin position="68"/>
        <end position="81"/>
    </location>
</feature>
<name>SCRA2_ARALY</name>
<reference key="1">
    <citation type="journal article" date="2009" name="PLoS Genet.">
        <title>Independent S-locus mutations caused self-fertility in Arabidopsis thaliana.</title>
        <authorList>
            <person name="Boggs N.A."/>
            <person name="Nasrallah J.B."/>
            <person name="Nasrallah M.E."/>
        </authorList>
    </citation>
    <scope>NUCLEOTIDE SEQUENCE [GENOMIC DNA]</scope>
    <scope>FUNCTION</scope>
</reference>
<reference key="2">
    <citation type="journal article" date="2006" name="Mol. Biol. Evol.">
        <title>The transition to self-compatibility in Arabidopsis thaliana and evolution within S-haplotypes over 10 Myr.</title>
        <authorList>
            <person name="Bechsgaard J.S."/>
            <person name="Castric V."/>
            <person name="Charlesworth D."/>
            <person name="Vekemans X."/>
            <person name="Schierup M.H."/>
        </authorList>
    </citation>
    <scope>NUCLEOTIDE SEQUENCE [GENOMIC DNA] OF 1-49</scope>
    <scope>FUNCTION</scope>
</reference>